<sequence length="288" mass="31648">MFILPPPQEPLLGAHTSAAGGLHNALYEGRDIGATTVQLFTANQRQWKRRALTQEMVDQFRIALNETSLSYIMSHAGYLNNPGAPNPEILEKTRVCMHQEIADCISLGISFVNFHPGAALSDSKESCLDRAITSFSQMAPLFENHPPLVVLLETTAGQGSLIGSSFEELAYLIQGIKALIPIGVCLDTCHIFAAGYDISSVAGWEQVLKHFDAVIGLSFLRAIHLNDSVFALGKNKDRHAPIGEGCIGSDSFCFLMQDERTRMLPKYLETPGGPDLWTKEIRYLQKVC</sequence>
<reference key="1">
    <citation type="journal article" date="2008" name="Genome Res.">
        <title>Chlamydia trachomatis: genome sequence analysis of lymphogranuloma venereum isolates.</title>
        <authorList>
            <person name="Thomson N.R."/>
            <person name="Holden M.T.G."/>
            <person name="Carder C."/>
            <person name="Lennard N."/>
            <person name="Lockey S.J."/>
            <person name="Marsh P."/>
            <person name="Skipp P."/>
            <person name="O'Connor C.D."/>
            <person name="Goodhead I."/>
            <person name="Norbertzcak H."/>
            <person name="Harris B."/>
            <person name="Ormond D."/>
            <person name="Rance R."/>
            <person name="Quail M.A."/>
            <person name="Parkhill J."/>
            <person name="Stephens R.S."/>
            <person name="Clarke I.N."/>
        </authorList>
    </citation>
    <scope>NUCLEOTIDE SEQUENCE [LARGE SCALE GENOMIC DNA]</scope>
    <source>
        <strain>ATCC VR-902B / DSM 19102 / 434/Bu</strain>
    </source>
</reference>
<accession>B0B8K0</accession>
<comment type="function">
    <text evidence="1">Endonuclease IV plays a role in DNA repair. It cleaves phosphodiester bonds at apurinic or apyrimidinic (AP) sites, generating a 3'-hydroxyl group and a 5'-terminal sugar phosphate.</text>
</comment>
<comment type="catalytic activity">
    <reaction evidence="1">
        <text>Endonucleolytic cleavage to 5'-phosphooligonucleotide end-products.</text>
        <dbReference type="EC" id="3.1.21.2"/>
    </reaction>
</comment>
<comment type="cofactor">
    <cofactor evidence="1">
        <name>Zn(2+)</name>
        <dbReference type="ChEBI" id="CHEBI:29105"/>
    </cofactor>
    <text evidence="1">Binds 3 Zn(2+) ions.</text>
</comment>
<comment type="similarity">
    <text evidence="1">Belongs to the AP endonuclease 2 family.</text>
</comment>
<proteinExistence type="inferred from homology"/>
<evidence type="ECO:0000255" key="1">
    <source>
        <dbReference type="HAMAP-Rule" id="MF_00152"/>
    </source>
</evidence>
<dbReference type="EC" id="3.1.21.2" evidence="1"/>
<dbReference type="EMBL" id="AM884176">
    <property type="protein sequence ID" value="CAP04326.1"/>
    <property type="molecule type" value="Genomic_DNA"/>
</dbReference>
<dbReference type="RefSeq" id="WP_009873956.1">
    <property type="nucleotide sequence ID" value="NC_010287.1"/>
</dbReference>
<dbReference type="RefSeq" id="YP_001654958.1">
    <property type="nucleotide sequence ID" value="NC_010287.1"/>
</dbReference>
<dbReference type="SMR" id="B0B8K0"/>
<dbReference type="KEGG" id="ctb:CTL0889"/>
<dbReference type="PATRIC" id="fig|471472.4.peg.954"/>
<dbReference type="HOGENOM" id="CLU_025885_0_1_0"/>
<dbReference type="Proteomes" id="UP001154402">
    <property type="component" value="Chromosome"/>
</dbReference>
<dbReference type="GO" id="GO:0008833">
    <property type="term" value="F:deoxyribonuclease IV (phage-T4-induced) activity"/>
    <property type="evidence" value="ECO:0007669"/>
    <property type="project" value="UniProtKB-UniRule"/>
</dbReference>
<dbReference type="GO" id="GO:0003677">
    <property type="term" value="F:DNA binding"/>
    <property type="evidence" value="ECO:0007669"/>
    <property type="project" value="InterPro"/>
</dbReference>
<dbReference type="GO" id="GO:0003906">
    <property type="term" value="F:DNA-(apurinic or apyrimidinic site) endonuclease activity"/>
    <property type="evidence" value="ECO:0007669"/>
    <property type="project" value="TreeGrafter"/>
</dbReference>
<dbReference type="GO" id="GO:0008081">
    <property type="term" value="F:phosphoric diester hydrolase activity"/>
    <property type="evidence" value="ECO:0007669"/>
    <property type="project" value="TreeGrafter"/>
</dbReference>
<dbReference type="GO" id="GO:0008270">
    <property type="term" value="F:zinc ion binding"/>
    <property type="evidence" value="ECO:0007669"/>
    <property type="project" value="UniProtKB-UniRule"/>
</dbReference>
<dbReference type="GO" id="GO:0006284">
    <property type="term" value="P:base-excision repair"/>
    <property type="evidence" value="ECO:0007669"/>
    <property type="project" value="TreeGrafter"/>
</dbReference>
<dbReference type="CDD" id="cd00019">
    <property type="entry name" value="AP2Ec"/>
    <property type="match status" value="1"/>
</dbReference>
<dbReference type="FunFam" id="3.20.20.150:FF:000001">
    <property type="entry name" value="Probable endonuclease 4"/>
    <property type="match status" value="1"/>
</dbReference>
<dbReference type="Gene3D" id="3.20.20.150">
    <property type="entry name" value="Divalent-metal-dependent TIM barrel enzymes"/>
    <property type="match status" value="1"/>
</dbReference>
<dbReference type="HAMAP" id="MF_00152">
    <property type="entry name" value="Nfo"/>
    <property type="match status" value="1"/>
</dbReference>
<dbReference type="InterPro" id="IPR001719">
    <property type="entry name" value="AP_endonuc_2"/>
</dbReference>
<dbReference type="InterPro" id="IPR018246">
    <property type="entry name" value="AP_endonuc_F2_Zn_BS"/>
</dbReference>
<dbReference type="InterPro" id="IPR036237">
    <property type="entry name" value="Xyl_isomerase-like_sf"/>
</dbReference>
<dbReference type="InterPro" id="IPR013022">
    <property type="entry name" value="Xyl_isomerase-like_TIM-brl"/>
</dbReference>
<dbReference type="NCBIfam" id="TIGR00587">
    <property type="entry name" value="nfo"/>
    <property type="match status" value="1"/>
</dbReference>
<dbReference type="NCBIfam" id="NF002197">
    <property type="entry name" value="PRK01060.1-2"/>
    <property type="match status" value="1"/>
</dbReference>
<dbReference type="PANTHER" id="PTHR21445:SF0">
    <property type="entry name" value="APURINIC-APYRIMIDINIC ENDONUCLEASE"/>
    <property type="match status" value="1"/>
</dbReference>
<dbReference type="PANTHER" id="PTHR21445">
    <property type="entry name" value="ENDONUCLEASE IV ENDODEOXYRIBONUCLEASE IV"/>
    <property type="match status" value="1"/>
</dbReference>
<dbReference type="Pfam" id="PF01261">
    <property type="entry name" value="AP_endonuc_2"/>
    <property type="match status" value="1"/>
</dbReference>
<dbReference type="SMART" id="SM00518">
    <property type="entry name" value="AP2Ec"/>
    <property type="match status" value="1"/>
</dbReference>
<dbReference type="SUPFAM" id="SSF51658">
    <property type="entry name" value="Xylose isomerase-like"/>
    <property type="match status" value="1"/>
</dbReference>
<dbReference type="PROSITE" id="PS00729">
    <property type="entry name" value="AP_NUCLEASE_F2_1"/>
    <property type="match status" value="1"/>
</dbReference>
<dbReference type="PROSITE" id="PS00730">
    <property type="entry name" value="AP_NUCLEASE_F2_2"/>
    <property type="match status" value="1"/>
</dbReference>
<dbReference type="PROSITE" id="PS00731">
    <property type="entry name" value="AP_NUCLEASE_F2_3"/>
    <property type="match status" value="1"/>
</dbReference>
<dbReference type="PROSITE" id="PS51432">
    <property type="entry name" value="AP_NUCLEASE_F2_4"/>
    <property type="match status" value="1"/>
</dbReference>
<feature type="chain" id="PRO_1000096874" description="Probable endonuclease 4">
    <location>
        <begin position="1"/>
        <end position="288"/>
    </location>
</feature>
<feature type="binding site" evidence="1">
    <location>
        <position position="75"/>
    </location>
    <ligand>
        <name>Zn(2+)</name>
        <dbReference type="ChEBI" id="CHEBI:29105"/>
        <label>1</label>
    </ligand>
</feature>
<feature type="binding site" evidence="1">
    <location>
        <position position="115"/>
    </location>
    <ligand>
        <name>Zn(2+)</name>
        <dbReference type="ChEBI" id="CHEBI:29105"/>
        <label>1</label>
    </ligand>
</feature>
<feature type="binding site" evidence="1">
    <location>
        <position position="153"/>
    </location>
    <ligand>
        <name>Zn(2+)</name>
        <dbReference type="ChEBI" id="CHEBI:29105"/>
        <label>1</label>
    </ligand>
</feature>
<feature type="binding site" evidence="1">
    <location>
        <position position="153"/>
    </location>
    <ligand>
        <name>Zn(2+)</name>
        <dbReference type="ChEBI" id="CHEBI:29105"/>
        <label>2</label>
    </ligand>
</feature>
<feature type="binding site" evidence="1">
    <location>
        <position position="187"/>
    </location>
    <ligand>
        <name>Zn(2+)</name>
        <dbReference type="ChEBI" id="CHEBI:29105"/>
        <label>2</label>
    </ligand>
</feature>
<feature type="binding site" evidence="1">
    <location>
        <position position="190"/>
    </location>
    <ligand>
        <name>Zn(2+)</name>
        <dbReference type="ChEBI" id="CHEBI:29105"/>
        <label>3</label>
    </ligand>
</feature>
<feature type="binding site" evidence="1">
    <location>
        <position position="224"/>
    </location>
    <ligand>
        <name>Zn(2+)</name>
        <dbReference type="ChEBI" id="CHEBI:29105"/>
        <label>2</label>
    </ligand>
</feature>
<feature type="binding site" evidence="1">
    <location>
        <position position="237"/>
    </location>
    <ligand>
        <name>Zn(2+)</name>
        <dbReference type="ChEBI" id="CHEBI:29105"/>
        <label>3</label>
    </ligand>
</feature>
<feature type="binding site" evidence="1">
    <location>
        <position position="239"/>
    </location>
    <ligand>
        <name>Zn(2+)</name>
        <dbReference type="ChEBI" id="CHEBI:29105"/>
        <label>3</label>
    </ligand>
</feature>
<feature type="binding site" evidence="1">
    <location>
        <position position="269"/>
    </location>
    <ligand>
        <name>Zn(2+)</name>
        <dbReference type="ChEBI" id="CHEBI:29105"/>
        <label>2</label>
    </ligand>
</feature>
<name>END4_CHLT2</name>
<protein>
    <recommendedName>
        <fullName evidence="1">Probable endonuclease 4</fullName>
        <ecNumber evidence="1">3.1.21.2</ecNumber>
    </recommendedName>
    <alternativeName>
        <fullName evidence="1">Endodeoxyribonuclease IV</fullName>
    </alternativeName>
    <alternativeName>
        <fullName evidence="1">Endonuclease IV</fullName>
    </alternativeName>
</protein>
<gene>
    <name evidence="1" type="primary">nfo</name>
    <name type="ordered locus">CTL0889</name>
</gene>
<keyword id="KW-0227">DNA damage</keyword>
<keyword id="KW-0234">DNA repair</keyword>
<keyword id="KW-0255">Endonuclease</keyword>
<keyword id="KW-0378">Hydrolase</keyword>
<keyword id="KW-0479">Metal-binding</keyword>
<keyword id="KW-0540">Nuclease</keyword>
<keyword id="KW-0862">Zinc</keyword>
<organism>
    <name type="scientific">Chlamydia trachomatis serovar L2 (strain ATCC VR-902B / DSM 19102 / 434/Bu)</name>
    <dbReference type="NCBI Taxonomy" id="471472"/>
    <lineage>
        <taxon>Bacteria</taxon>
        <taxon>Pseudomonadati</taxon>
        <taxon>Chlamydiota</taxon>
        <taxon>Chlamydiia</taxon>
        <taxon>Chlamydiales</taxon>
        <taxon>Chlamydiaceae</taxon>
        <taxon>Chlamydia/Chlamydophila group</taxon>
        <taxon>Chlamydia</taxon>
    </lineage>
</organism>